<name>NHAA_FRATN</name>
<organism>
    <name type="scientific">Francisella tularensis subsp. novicida (strain U112)</name>
    <dbReference type="NCBI Taxonomy" id="401614"/>
    <lineage>
        <taxon>Bacteria</taxon>
        <taxon>Pseudomonadati</taxon>
        <taxon>Pseudomonadota</taxon>
        <taxon>Gammaproteobacteria</taxon>
        <taxon>Thiotrichales</taxon>
        <taxon>Francisellaceae</taxon>
        <taxon>Francisella</taxon>
    </lineage>
</organism>
<comment type="function">
    <text evidence="1">Na(+)/H(+) antiporter that extrudes sodium in exchange for external protons.</text>
</comment>
<comment type="catalytic activity">
    <reaction evidence="1">
        <text>Na(+)(in) + 2 H(+)(out) = Na(+)(out) + 2 H(+)(in)</text>
        <dbReference type="Rhea" id="RHEA:29251"/>
        <dbReference type="ChEBI" id="CHEBI:15378"/>
        <dbReference type="ChEBI" id="CHEBI:29101"/>
    </reaction>
    <physiologicalReaction direction="left-to-right" evidence="1">
        <dbReference type="Rhea" id="RHEA:29252"/>
    </physiologicalReaction>
</comment>
<comment type="subcellular location">
    <subcellularLocation>
        <location evidence="1">Cell inner membrane</location>
        <topology evidence="1">Multi-pass membrane protein</topology>
    </subcellularLocation>
</comment>
<comment type="similarity">
    <text evidence="1">Belongs to the NhaA Na(+)/H(+) (TC 2.A.33) antiporter family.</text>
</comment>
<proteinExistence type="inferred from homology"/>
<keyword id="KW-0050">Antiport</keyword>
<keyword id="KW-0997">Cell inner membrane</keyword>
<keyword id="KW-1003">Cell membrane</keyword>
<keyword id="KW-0406">Ion transport</keyword>
<keyword id="KW-0472">Membrane</keyword>
<keyword id="KW-0915">Sodium</keyword>
<keyword id="KW-0739">Sodium transport</keyword>
<keyword id="KW-0812">Transmembrane</keyword>
<keyword id="KW-1133">Transmembrane helix</keyword>
<keyword id="KW-0813">Transport</keyword>
<protein>
    <recommendedName>
        <fullName evidence="1">Na(+)/H(+) antiporter NhaA</fullName>
    </recommendedName>
    <alternativeName>
        <fullName evidence="1">Sodium/proton antiporter NhaA</fullName>
    </alternativeName>
</protein>
<feature type="chain" id="PRO_0000334297" description="Na(+)/H(+) antiporter NhaA">
    <location>
        <begin position="1"/>
        <end position="383"/>
    </location>
</feature>
<feature type="transmembrane region" description="Helical" evidence="1">
    <location>
        <begin position="10"/>
        <end position="30"/>
    </location>
</feature>
<feature type="transmembrane region" description="Helical" evidence="1">
    <location>
        <begin position="56"/>
        <end position="76"/>
    </location>
</feature>
<feature type="transmembrane region" description="Helical" evidence="1">
    <location>
        <begin position="91"/>
        <end position="111"/>
    </location>
</feature>
<feature type="transmembrane region" description="Helical" evidence="1">
    <location>
        <begin position="121"/>
        <end position="141"/>
    </location>
</feature>
<feature type="transmembrane region" description="Helical" evidence="1">
    <location>
        <begin position="150"/>
        <end position="170"/>
    </location>
</feature>
<feature type="transmembrane region" description="Helical" evidence="1">
    <location>
        <begin position="174"/>
        <end position="194"/>
    </location>
</feature>
<feature type="transmembrane region" description="Helical" evidence="1">
    <location>
        <begin position="206"/>
        <end position="226"/>
    </location>
</feature>
<feature type="transmembrane region" description="Helical" evidence="1">
    <location>
        <begin position="254"/>
        <end position="274"/>
    </location>
</feature>
<feature type="transmembrane region" description="Helical" evidence="1">
    <location>
        <begin position="275"/>
        <end position="295"/>
    </location>
</feature>
<feature type="transmembrane region" description="Helical" evidence="1">
    <location>
        <begin position="327"/>
        <end position="347"/>
    </location>
</feature>
<feature type="transmembrane region" description="Helical" evidence="1">
    <location>
        <begin position="355"/>
        <end position="375"/>
    </location>
</feature>
<sequence length="383" mass="41669">MGASQKNQELIGGLILFSAALLAIVVNNSPLASYYAMLETINVKLGIENLVIDKNLMHWINDGLMAIYFLYIGLEIKREIIVGTLSKPSNIITPAIAAFAGLAMPSLIYLSINHDIKVINGWAIPSATDIAFTLGILALLGTRVPAKLKLLVITIAIFDDIAAIAIIAIFYTKSLSLLSLSLGTLFILAMIICNRIFKINRSSVYVVLGFFAWFCTIKSGVHATLAGFTTALCIPFRENDKDSPANFMEDSLHPWIIYFILPVFAFANAGISFSGISFSILFEPITLGIILGLFVGKQLGIFSILAVFKKLKWFKLGESFSNLQLYGISLLCGIGFTMSLFIGVLAFNDTHLLNAIKIGVVVGSVLSGFFGYIVLRFIVTNPS</sequence>
<gene>
    <name evidence="1" type="primary">nhaA</name>
    <name type="ordered locus">FTN_1752</name>
</gene>
<reference key="1">
    <citation type="journal article" date="2007" name="Genome Biol.">
        <title>Comparison of Francisella tularensis genomes reveals evolutionary events associated with the emergence of human pathogenic strains.</title>
        <authorList>
            <person name="Rohmer L."/>
            <person name="Fong C."/>
            <person name="Abmayr S."/>
            <person name="Wasnick M."/>
            <person name="Larson Freeman T.J."/>
            <person name="Radey M."/>
            <person name="Guina T."/>
            <person name="Svensson K."/>
            <person name="Hayden H.S."/>
            <person name="Jacobs M."/>
            <person name="Gallagher L.A."/>
            <person name="Manoil C."/>
            <person name="Ernst R.K."/>
            <person name="Drees B."/>
            <person name="Buckley D."/>
            <person name="Haugen E."/>
            <person name="Bovee D."/>
            <person name="Zhou Y."/>
            <person name="Chang J."/>
            <person name="Levy R."/>
            <person name="Lim R."/>
            <person name="Gillett W."/>
            <person name="Guenthener D."/>
            <person name="Kang A."/>
            <person name="Shaffer S.A."/>
            <person name="Taylor G."/>
            <person name="Chen J."/>
            <person name="Gallis B."/>
            <person name="D'Argenio D.A."/>
            <person name="Forsman M."/>
            <person name="Olson M.V."/>
            <person name="Goodlett D.R."/>
            <person name="Kaul R."/>
            <person name="Miller S.I."/>
            <person name="Brittnacher M.J."/>
        </authorList>
    </citation>
    <scope>NUCLEOTIDE SEQUENCE [LARGE SCALE GENOMIC DNA]</scope>
    <source>
        <strain>U112</strain>
    </source>
</reference>
<evidence type="ECO:0000255" key="1">
    <source>
        <dbReference type="HAMAP-Rule" id="MF_01844"/>
    </source>
</evidence>
<accession>A0Q8N8</accession>
<dbReference type="EMBL" id="CP000439">
    <property type="protein sequence ID" value="ABK90603.1"/>
    <property type="molecule type" value="Genomic_DNA"/>
</dbReference>
<dbReference type="RefSeq" id="WP_003032579.1">
    <property type="nucleotide sequence ID" value="NZ_CP009633.1"/>
</dbReference>
<dbReference type="SMR" id="A0Q8N8"/>
<dbReference type="KEGG" id="ftn:FTN_1752"/>
<dbReference type="KEGG" id="ftx:AW25_234"/>
<dbReference type="BioCyc" id="FTUL401614:G1G75-1815-MONOMER"/>
<dbReference type="Proteomes" id="UP000000762">
    <property type="component" value="Chromosome"/>
</dbReference>
<dbReference type="GO" id="GO:0005886">
    <property type="term" value="C:plasma membrane"/>
    <property type="evidence" value="ECO:0007669"/>
    <property type="project" value="UniProtKB-SubCell"/>
</dbReference>
<dbReference type="GO" id="GO:0015385">
    <property type="term" value="F:sodium:proton antiporter activity"/>
    <property type="evidence" value="ECO:0007669"/>
    <property type="project" value="TreeGrafter"/>
</dbReference>
<dbReference type="GO" id="GO:0006885">
    <property type="term" value="P:regulation of pH"/>
    <property type="evidence" value="ECO:0007669"/>
    <property type="project" value="InterPro"/>
</dbReference>
<dbReference type="Gene3D" id="1.20.1530.10">
    <property type="entry name" value="Na+/H+ antiporter like domain"/>
    <property type="match status" value="1"/>
</dbReference>
<dbReference type="HAMAP" id="MF_01844">
    <property type="entry name" value="NhaA"/>
    <property type="match status" value="1"/>
</dbReference>
<dbReference type="InterPro" id="IPR023171">
    <property type="entry name" value="Na/H_antiporter_dom_sf"/>
</dbReference>
<dbReference type="InterPro" id="IPR004670">
    <property type="entry name" value="NhaA"/>
</dbReference>
<dbReference type="NCBIfam" id="TIGR00773">
    <property type="entry name" value="NhaA"/>
    <property type="match status" value="1"/>
</dbReference>
<dbReference type="NCBIfam" id="NF007111">
    <property type="entry name" value="PRK09560.1"/>
    <property type="match status" value="1"/>
</dbReference>
<dbReference type="NCBIfam" id="NF007112">
    <property type="entry name" value="PRK09561.1"/>
    <property type="match status" value="1"/>
</dbReference>
<dbReference type="NCBIfam" id="NF011427">
    <property type="entry name" value="PRK14854.1"/>
    <property type="match status" value="1"/>
</dbReference>
<dbReference type="PANTHER" id="PTHR30341:SF0">
    <property type="entry name" value="NA(+)_H(+) ANTIPORTER NHAA"/>
    <property type="match status" value="1"/>
</dbReference>
<dbReference type="PANTHER" id="PTHR30341">
    <property type="entry name" value="SODIUM ION/PROTON ANTIPORTER NHAA-RELATED"/>
    <property type="match status" value="1"/>
</dbReference>
<dbReference type="Pfam" id="PF06965">
    <property type="entry name" value="Na_H_antiport_1"/>
    <property type="match status" value="1"/>
</dbReference>